<name>PYRH_AZOSB</name>
<keyword id="KW-0067">ATP-binding</keyword>
<keyword id="KW-0963">Cytoplasm</keyword>
<keyword id="KW-0418">Kinase</keyword>
<keyword id="KW-0547">Nucleotide-binding</keyword>
<keyword id="KW-0665">Pyrimidine biosynthesis</keyword>
<keyword id="KW-1185">Reference proteome</keyword>
<keyword id="KW-0808">Transferase</keyword>
<gene>
    <name evidence="1" type="primary">pyrH</name>
    <name type="ordered locus">azo1907</name>
</gene>
<sequence>MTAAAYKRILLKLSGEALMGDDAYGINEDVVSRIVSEIAEVTRLGVEVGVVIGGGNIFRGMKGAASGMDRATADYMGMLATVMNAMALADAMRRNGVEARVQSALRIDQVVEPYIRGRAIRHLEEGRVVIFAAGTGNPFFTTDTAAALRGSEIAAQIVLKATKVDGVYTADPKKDPAAQRFHRISFDEAIGRNLAVLDATAFALCRDQKLPINVFSIFKPGALKRVVMGEDEGTLVHS</sequence>
<dbReference type="EC" id="2.7.4.22" evidence="1"/>
<dbReference type="EMBL" id="AM406670">
    <property type="protein sequence ID" value="CAL94524.1"/>
    <property type="molecule type" value="Genomic_DNA"/>
</dbReference>
<dbReference type="RefSeq" id="WP_011765640.1">
    <property type="nucleotide sequence ID" value="NC_008702.1"/>
</dbReference>
<dbReference type="SMR" id="A1K6R9"/>
<dbReference type="STRING" id="62928.azo1907"/>
<dbReference type="KEGG" id="aoa:dqs_2062"/>
<dbReference type="KEGG" id="azo:azo1907"/>
<dbReference type="eggNOG" id="COG0528">
    <property type="taxonomic scope" value="Bacteria"/>
</dbReference>
<dbReference type="HOGENOM" id="CLU_033861_0_0_4"/>
<dbReference type="OrthoDB" id="9807458at2"/>
<dbReference type="UniPathway" id="UPA00159">
    <property type="reaction ID" value="UER00275"/>
</dbReference>
<dbReference type="Proteomes" id="UP000002588">
    <property type="component" value="Chromosome"/>
</dbReference>
<dbReference type="GO" id="GO:0005829">
    <property type="term" value="C:cytosol"/>
    <property type="evidence" value="ECO:0007669"/>
    <property type="project" value="TreeGrafter"/>
</dbReference>
<dbReference type="GO" id="GO:0005524">
    <property type="term" value="F:ATP binding"/>
    <property type="evidence" value="ECO:0007669"/>
    <property type="project" value="UniProtKB-KW"/>
</dbReference>
<dbReference type="GO" id="GO:0033862">
    <property type="term" value="F:UMP kinase activity"/>
    <property type="evidence" value="ECO:0007669"/>
    <property type="project" value="UniProtKB-EC"/>
</dbReference>
<dbReference type="GO" id="GO:0044210">
    <property type="term" value="P:'de novo' CTP biosynthetic process"/>
    <property type="evidence" value="ECO:0007669"/>
    <property type="project" value="UniProtKB-UniRule"/>
</dbReference>
<dbReference type="GO" id="GO:0006225">
    <property type="term" value="P:UDP biosynthetic process"/>
    <property type="evidence" value="ECO:0007669"/>
    <property type="project" value="TreeGrafter"/>
</dbReference>
<dbReference type="CDD" id="cd04254">
    <property type="entry name" value="AAK_UMPK-PyrH-Ec"/>
    <property type="match status" value="1"/>
</dbReference>
<dbReference type="FunFam" id="3.40.1160.10:FF:000001">
    <property type="entry name" value="Uridylate kinase"/>
    <property type="match status" value="1"/>
</dbReference>
<dbReference type="Gene3D" id="3.40.1160.10">
    <property type="entry name" value="Acetylglutamate kinase-like"/>
    <property type="match status" value="1"/>
</dbReference>
<dbReference type="HAMAP" id="MF_01220_B">
    <property type="entry name" value="PyrH_B"/>
    <property type="match status" value="1"/>
</dbReference>
<dbReference type="InterPro" id="IPR036393">
    <property type="entry name" value="AceGlu_kinase-like_sf"/>
</dbReference>
<dbReference type="InterPro" id="IPR001048">
    <property type="entry name" value="Asp/Glu/Uridylate_kinase"/>
</dbReference>
<dbReference type="InterPro" id="IPR011817">
    <property type="entry name" value="Uridylate_kinase"/>
</dbReference>
<dbReference type="InterPro" id="IPR015963">
    <property type="entry name" value="Uridylate_kinase_bac"/>
</dbReference>
<dbReference type="NCBIfam" id="TIGR02075">
    <property type="entry name" value="pyrH_bact"/>
    <property type="match status" value="1"/>
</dbReference>
<dbReference type="PANTHER" id="PTHR42833">
    <property type="entry name" value="URIDYLATE KINASE"/>
    <property type="match status" value="1"/>
</dbReference>
<dbReference type="PANTHER" id="PTHR42833:SF4">
    <property type="entry name" value="URIDYLATE KINASE PUMPKIN, CHLOROPLASTIC"/>
    <property type="match status" value="1"/>
</dbReference>
<dbReference type="Pfam" id="PF00696">
    <property type="entry name" value="AA_kinase"/>
    <property type="match status" value="1"/>
</dbReference>
<dbReference type="PIRSF" id="PIRSF005650">
    <property type="entry name" value="Uridylate_kin"/>
    <property type="match status" value="1"/>
</dbReference>
<dbReference type="SUPFAM" id="SSF53633">
    <property type="entry name" value="Carbamate kinase-like"/>
    <property type="match status" value="1"/>
</dbReference>
<protein>
    <recommendedName>
        <fullName evidence="1">Uridylate kinase</fullName>
        <shortName evidence="1">UK</shortName>
        <ecNumber evidence="1">2.7.4.22</ecNumber>
    </recommendedName>
    <alternativeName>
        <fullName evidence="1">Uridine monophosphate kinase</fullName>
        <shortName evidence="1">UMP kinase</shortName>
        <shortName evidence="1">UMPK</shortName>
    </alternativeName>
</protein>
<proteinExistence type="inferred from homology"/>
<reference key="1">
    <citation type="journal article" date="2006" name="Nat. Biotechnol.">
        <title>Complete genome of the mutualistic, N2-fixing grass endophyte Azoarcus sp. strain BH72.</title>
        <authorList>
            <person name="Krause A."/>
            <person name="Ramakumar A."/>
            <person name="Bartels D."/>
            <person name="Battistoni F."/>
            <person name="Bekel T."/>
            <person name="Boch J."/>
            <person name="Boehm M."/>
            <person name="Friedrich F."/>
            <person name="Hurek T."/>
            <person name="Krause L."/>
            <person name="Linke B."/>
            <person name="McHardy A.C."/>
            <person name="Sarkar A."/>
            <person name="Schneiker S."/>
            <person name="Syed A.A."/>
            <person name="Thauer R."/>
            <person name="Vorhoelter F.-J."/>
            <person name="Weidner S."/>
            <person name="Puehler A."/>
            <person name="Reinhold-Hurek B."/>
            <person name="Kaiser O."/>
            <person name="Goesmann A."/>
        </authorList>
    </citation>
    <scope>NUCLEOTIDE SEQUENCE [LARGE SCALE GENOMIC DNA]</scope>
    <source>
        <strain>BH72</strain>
    </source>
</reference>
<accession>A1K6R9</accession>
<comment type="function">
    <text evidence="1">Catalyzes the reversible phosphorylation of UMP to UDP.</text>
</comment>
<comment type="catalytic activity">
    <reaction evidence="1">
        <text>UMP + ATP = UDP + ADP</text>
        <dbReference type="Rhea" id="RHEA:24400"/>
        <dbReference type="ChEBI" id="CHEBI:30616"/>
        <dbReference type="ChEBI" id="CHEBI:57865"/>
        <dbReference type="ChEBI" id="CHEBI:58223"/>
        <dbReference type="ChEBI" id="CHEBI:456216"/>
        <dbReference type="EC" id="2.7.4.22"/>
    </reaction>
</comment>
<comment type="activity regulation">
    <text evidence="1">Inhibited by UTP.</text>
</comment>
<comment type="pathway">
    <text evidence="1">Pyrimidine metabolism; CTP biosynthesis via de novo pathway; UDP from UMP (UMPK route): step 1/1.</text>
</comment>
<comment type="subunit">
    <text evidence="1">Homohexamer.</text>
</comment>
<comment type="subcellular location">
    <subcellularLocation>
        <location evidence="1">Cytoplasm</location>
    </subcellularLocation>
</comment>
<comment type="similarity">
    <text evidence="1">Belongs to the UMP kinase family.</text>
</comment>
<feature type="chain" id="PRO_0000323788" description="Uridylate kinase">
    <location>
        <begin position="1"/>
        <end position="238"/>
    </location>
</feature>
<feature type="binding site" evidence="1">
    <location>
        <begin position="12"/>
        <end position="15"/>
    </location>
    <ligand>
        <name>ATP</name>
        <dbReference type="ChEBI" id="CHEBI:30616"/>
    </ligand>
</feature>
<feature type="binding site" evidence="1">
    <location>
        <position position="54"/>
    </location>
    <ligand>
        <name>UMP</name>
        <dbReference type="ChEBI" id="CHEBI:57865"/>
    </ligand>
</feature>
<feature type="binding site" evidence="1">
    <location>
        <position position="55"/>
    </location>
    <ligand>
        <name>ATP</name>
        <dbReference type="ChEBI" id="CHEBI:30616"/>
    </ligand>
</feature>
<feature type="binding site" evidence="1">
    <location>
        <position position="59"/>
    </location>
    <ligand>
        <name>ATP</name>
        <dbReference type="ChEBI" id="CHEBI:30616"/>
    </ligand>
</feature>
<feature type="binding site" evidence="1">
    <location>
        <position position="74"/>
    </location>
    <ligand>
        <name>UMP</name>
        <dbReference type="ChEBI" id="CHEBI:57865"/>
    </ligand>
</feature>
<feature type="binding site" evidence="1">
    <location>
        <begin position="135"/>
        <end position="142"/>
    </location>
    <ligand>
        <name>UMP</name>
        <dbReference type="ChEBI" id="CHEBI:57865"/>
    </ligand>
</feature>
<feature type="binding site" evidence="1">
    <location>
        <position position="162"/>
    </location>
    <ligand>
        <name>ATP</name>
        <dbReference type="ChEBI" id="CHEBI:30616"/>
    </ligand>
</feature>
<feature type="binding site" evidence="1">
    <location>
        <position position="168"/>
    </location>
    <ligand>
        <name>ATP</name>
        <dbReference type="ChEBI" id="CHEBI:30616"/>
    </ligand>
</feature>
<feature type="binding site" evidence="1">
    <location>
        <position position="171"/>
    </location>
    <ligand>
        <name>ATP</name>
        <dbReference type="ChEBI" id="CHEBI:30616"/>
    </ligand>
</feature>
<organism>
    <name type="scientific">Azoarcus sp. (strain BH72)</name>
    <dbReference type="NCBI Taxonomy" id="418699"/>
    <lineage>
        <taxon>Bacteria</taxon>
        <taxon>Pseudomonadati</taxon>
        <taxon>Pseudomonadota</taxon>
        <taxon>Betaproteobacteria</taxon>
        <taxon>Rhodocyclales</taxon>
        <taxon>Zoogloeaceae</taxon>
        <taxon>Azoarcus</taxon>
    </lineage>
</organism>
<evidence type="ECO:0000255" key="1">
    <source>
        <dbReference type="HAMAP-Rule" id="MF_01220"/>
    </source>
</evidence>